<name>SYA_DECAR</name>
<gene>
    <name evidence="1" type="primary">alaS</name>
    <name type="ordered locus">Daro_3303</name>
</gene>
<reference key="1">
    <citation type="journal article" date="2009" name="BMC Genomics">
        <title>Metabolic analysis of the soil microbe Dechloromonas aromatica str. RCB: indications of a surprisingly complex life-style and cryptic anaerobic pathways for aromatic degradation.</title>
        <authorList>
            <person name="Salinero K.K."/>
            <person name="Keller K."/>
            <person name="Feil W.S."/>
            <person name="Feil H."/>
            <person name="Trong S."/>
            <person name="Di Bartolo G."/>
            <person name="Lapidus A."/>
        </authorList>
    </citation>
    <scope>NUCLEOTIDE SEQUENCE [LARGE SCALE GENOMIC DNA]</scope>
    <source>
        <strain>RCB</strain>
    </source>
</reference>
<accession>Q47AU8</accession>
<dbReference type="EC" id="6.1.1.7" evidence="1"/>
<dbReference type="EMBL" id="CP000089">
    <property type="protein sequence ID" value="AAZ48033.1"/>
    <property type="molecule type" value="Genomic_DNA"/>
</dbReference>
<dbReference type="SMR" id="Q47AU8"/>
<dbReference type="STRING" id="159087.Daro_3303"/>
<dbReference type="KEGG" id="dar:Daro_3303"/>
<dbReference type="eggNOG" id="COG0013">
    <property type="taxonomic scope" value="Bacteria"/>
</dbReference>
<dbReference type="HOGENOM" id="CLU_004485_1_1_4"/>
<dbReference type="OrthoDB" id="9803884at2"/>
<dbReference type="GO" id="GO:0005829">
    <property type="term" value="C:cytosol"/>
    <property type="evidence" value="ECO:0007669"/>
    <property type="project" value="TreeGrafter"/>
</dbReference>
<dbReference type="GO" id="GO:0004813">
    <property type="term" value="F:alanine-tRNA ligase activity"/>
    <property type="evidence" value="ECO:0007669"/>
    <property type="project" value="UniProtKB-UniRule"/>
</dbReference>
<dbReference type="GO" id="GO:0002161">
    <property type="term" value="F:aminoacyl-tRNA deacylase activity"/>
    <property type="evidence" value="ECO:0007669"/>
    <property type="project" value="TreeGrafter"/>
</dbReference>
<dbReference type="GO" id="GO:0005524">
    <property type="term" value="F:ATP binding"/>
    <property type="evidence" value="ECO:0007669"/>
    <property type="project" value="UniProtKB-UniRule"/>
</dbReference>
<dbReference type="GO" id="GO:0000049">
    <property type="term" value="F:tRNA binding"/>
    <property type="evidence" value="ECO:0007669"/>
    <property type="project" value="UniProtKB-KW"/>
</dbReference>
<dbReference type="GO" id="GO:0008270">
    <property type="term" value="F:zinc ion binding"/>
    <property type="evidence" value="ECO:0007669"/>
    <property type="project" value="UniProtKB-UniRule"/>
</dbReference>
<dbReference type="GO" id="GO:0006419">
    <property type="term" value="P:alanyl-tRNA aminoacylation"/>
    <property type="evidence" value="ECO:0007669"/>
    <property type="project" value="UniProtKB-UniRule"/>
</dbReference>
<dbReference type="GO" id="GO:0045892">
    <property type="term" value="P:negative regulation of DNA-templated transcription"/>
    <property type="evidence" value="ECO:0007669"/>
    <property type="project" value="TreeGrafter"/>
</dbReference>
<dbReference type="CDD" id="cd00673">
    <property type="entry name" value="AlaRS_core"/>
    <property type="match status" value="1"/>
</dbReference>
<dbReference type="FunFam" id="2.40.30.130:FF:000001">
    <property type="entry name" value="Alanine--tRNA ligase"/>
    <property type="match status" value="1"/>
</dbReference>
<dbReference type="FunFam" id="3.10.310.40:FF:000001">
    <property type="entry name" value="Alanine--tRNA ligase"/>
    <property type="match status" value="1"/>
</dbReference>
<dbReference type="FunFam" id="3.30.54.20:FF:000001">
    <property type="entry name" value="Alanine--tRNA ligase"/>
    <property type="match status" value="1"/>
</dbReference>
<dbReference type="FunFam" id="3.30.930.10:FF:000004">
    <property type="entry name" value="Alanine--tRNA ligase"/>
    <property type="match status" value="1"/>
</dbReference>
<dbReference type="FunFam" id="3.30.980.10:FF:000004">
    <property type="entry name" value="Alanine--tRNA ligase, cytoplasmic"/>
    <property type="match status" value="1"/>
</dbReference>
<dbReference type="Gene3D" id="2.40.30.130">
    <property type="match status" value="1"/>
</dbReference>
<dbReference type="Gene3D" id="3.10.310.40">
    <property type="match status" value="1"/>
</dbReference>
<dbReference type="Gene3D" id="3.30.54.20">
    <property type="match status" value="1"/>
</dbReference>
<dbReference type="Gene3D" id="6.10.250.550">
    <property type="match status" value="1"/>
</dbReference>
<dbReference type="Gene3D" id="3.30.930.10">
    <property type="entry name" value="Bira Bifunctional Protein, Domain 2"/>
    <property type="match status" value="1"/>
</dbReference>
<dbReference type="Gene3D" id="3.30.980.10">
    <property type="entry name" value="Threonyl-trna Synthetase, Chain A, domain 2"/>
    <property type="match status" value="1"/>
</dbReference>
<dbReference type="HAMAP" id="MF_00036_B">
    <property type="entry name" value="Ala_tRNA_synth_B"/>
    <property type="match status" value="1"/>
</dbReference>
<dbReference type="InterPro" id="IPR045864">
    <property type="entry name" value="aa-tRNA-synth_II/BPL/LPL"/>
</dbReference>
<dbReference type="InterPro" id="IPR002318">
    <property type="entry name" value="Ala-tRNA-lgiase_IIc"/>
</dbReference>
<dbReference type="InterPro" id="IPR018162">
    <property type="entry name" value="Ala-tRNA-ligase_IIc_anticod-bd"/>
</dbReference>
<dbReference type="InterPro" id="IPR018165">
    <property type="entry name" value="Ala-tRNA-synth_IIc_core"/>
</dbReference>
<dbReference type="InterPro" id="IPR018164">
    <property type="entry name" value="Ala-tRNA-synth_IIc_N"/>
</dbReference>
<dbReference type="InterPro" id="IPR050058">
    <property type="entry name" value="Ala-tRNA_ligase"/>
</dbReference>
<dbReference type="InterPro" id="IPR023033">
    <property type="entry name" value="Ala_tRNA_ligase_euk/bac"/>
</dbReference>
<dbReference type="InterPro" id="IPR003156">
    <property type="entry name" value="DHHA1_dom"/>
</dbReference>
<dbReference type="InterPro" id="IPR018163">
    <property type="entry name" value="Thr/Ala-tRNA-synth_IIc_edit"/>
</dbReference>
<dbReference type="InterPro" id="IPR009000">
    <property type="entry name" value="Transl_B-barrel_sf"/>
</dbReference>
<dbReference type="InterPro" id="IPR012947">
    <property type="entry name" value="tRNA_SAD"/>
</dbReference>
<dbReference type="NCBIfam" id="TIGR00344">
    <property type="entry name" value="alaS"/>
    <property type="match status" value="1"/>
</dbReference>
<dbReference type="PANTHER" id="PTHR11777:SF9">
    <property type="entry name" value="ALANINE--TRNA LIGASE, CYTOPLASMIC"/>
    <property type="match status" value="1"/>
</dbReference>
<dbReference type="PANTHER" id="PTHR11777">
    <property type="entry name" value="ALANYL-TRNA SYNTHETASE"/>
    <property type="match status" value="1"/>
</dbReference>
<dbReference type="Pfam" id="PF02272">
    <property type="entry name" value="DHHA1"/>
    <property type="match status" value="1"/>
</dbReference>
<dbReference type="Pfam" id="PF01411">
    <property type="entry name" value="tRNA-synt_2c"/>
    <property type="match status" value="1"/>
</dbReference>
<dbReference type="Pfam" id="PF07973">
    <property type="entry name" value="tRNA_SAD"/>
    <property type="match status" value="1"/>
</dbReference>
<dbReference type="PRINTS" id="PR00980">
    <property type="entry name" value="TRNASYNTHALA"/>
</dbReference>
<dbReference type="SMART" id="SM00863">
    <property type="entry name" value="tRNA_SAD"/>
    <property type="match status" value="1"/>
</dbReference>
<dbReference type="SUPFAM" id="SSF55681">
    <property type="entry name" value="Class II aaRS and biotin synthetases"/>
    <property type="match status" value="1"/>
</dbReference>
<dbReference type="SUPFAM" id="SSF101353">
    <property type="entry name" value="Putative anticodon-binding domain of alanyl-tRNA synthetase (AlaRS)"/>
    <property type="match status" value="1"/>
</dbReference>
<dbReference type="SUPFAM" id="SSF55186">
    <property type="entry name" value="ThrRS/AlaRS common domain"/>
    <property type="match status" value="1"/>
</dbReference>
<dbReference type="SUPFAM" id="SSF50447">
    <property type="entry name" value="Translation proteins"/>
    <property type="match status" value="1"/>
</dbReference>
<dbReference type="PROSITE" id="PS50860">
    <property type="entry name" value="AA_TRNA_LIGASE_II_ALA"/>
    <property type="match status" value="1"/>
</dbReference>
<keyword id="KW-0030">Aminoacyl-tRNA synthetase</keyword>
<keyword id="KW-0067">ATP-binding</keyword>
<keyword id="KW-0963">Cytoplasm</keyword>
<keyword id="KW-0436">Ligase</keyword>
<keyword id="KW-0479">Metal-binding</keyword>
<keyword id="KW-0547">Nucleotide-binding</keyword>
<keyword id="KW-0648">Protein biosynthesis</keyword>
<keyword id="KW-0694">RNA-binding</keyword>
<keyword id="KW-0820">tRNA-binding</keyword>
<keyword id="KW-0862">Zinc</keyword>
<sequence length="871" mass="94564">MKSSEIRQQFLDFFASKGHQIVSSSSLVPHEDPTLLFTNAGMNQFKDVFLGFDKRPYSRATTSQKCVRAGGKHNDLENVGYTARHHTFFEMLGNFSFGDYFKRDAIKYAWELLTEVYKLPKDKLTVTVYAEDDEAYDIWTKEIGVPVERVIRIGDNKGARYASDNFWMMGDTGPCGPCTEIFYDHGEKYWGGPPGSPEEDGDRFIEIWNNVFMQFNRDEAGVMHPLPKPSVDTGMGLERVSAVLQGVHANYEIDLFQALLKAAARETSDADLDSPSLKVLADHIRACSFLLADGVIPGNEGRGYVLRRIIRRAIRHGYKLGARAAFFHKMVPDLVAEMGMAYPELGQNQAKIVATLKQEEDRFFETIEHGMAILEGELKSLGEGGVFNGDTAFKLHDTYGFPLDLTQDICREHKITVDAAAFDAAMARQKEQARAAGKFKMATNLEYDGPATTFHGYAALEYKANVLALYKDGIAVNQLNEGEMGVVVLDDTPFYAESGGQVGDCGALQSVHGIFAVEDTQKIQATVFGHHGVVKTGTITVGNGVAAKVDVQARQRIMRNHSATHLLHKALREVLGDHVQQKGSQVDPDKTRFDFVHNQPMTDEEIRRVENIVNAEILANVATETRVLPIAEAQKLGAMMLFGEKYGDDVRVLDIGSSRELCGGTHVSRTGDIGLFSITAEGGVAAGVRRVEAVTGDNALAYMQDMESALGGVAGTLKVLPKDVHGRVLAVLDQVKKLERELAALKGKLASAQGDDMLSNAVDIKGAKVLAATLEGADVNALRETMDKLKDKLKSAAIVLASVADGKVTLIAGVTADLTGKVKAGELVNLVAQQIGGKGGGRPDMAQAGGTQPENLPAALASVAGWVEGKL</sequence>
<feature type="chain" id="PRO_0000075102" description="Alanine--tRNA ligase">
    <location>
        <begin position="1"/>
        <end position="871"/>
    </location>
</feature>
<feature type="binding site" evidence="1">
    <location>
        <position position="561"/>
    </location>
    <ligand>
        <name>Zn(2+)</name>
        <dbReference type="ChEBI" id="CHEBI:29105"/>
    </ligand>
</feature>
<feature type="binding site" evidence="1">
    <location>
        <position position="565"/>
    </location>
    <ligand>
        <name>Zn(2+)</name>
        <dbReference type="ChEBI" id="CHEBI:29105"/>
    </ligand>
</feature>
<feature type="binding site" evidence="1">
    <location>
        <position position="662"/>
    </location>
    <ligand>
        <name>Zn(2+)</name>
        <dbReference type="ChEBI" id="CHEBI:29105"/>
    </ligand>
</feature>
<feature type="binding site" evidence="1">
    <location>
        <position position="666"/>
    </location>
    <ligand>
        <name>Zn(2+)</name>
        <dbReference type="ChEBI" id="CHEBI:29105"/>
    </ligand>
</feature>
<proteinExistence type="inferred from homology"/>
<comment type="function">
    <text evidence="1">Catalyzes the attachment of alanine to tRNA(Ala) in a two-step reaction: alanine is first activated by ATP to form Ala-AMP and then transferred to the acceptor end of tRNA(Ala). Also edits incorrectly charged Ser-tRNA(Ala) and Gly-tRNA(Ala) via its editing domain.</text>
</comment>
<comment type="catalytic activity">
    <reaction evidence="1">
        <text>tRNA(Ala) + L-alanine + ATP = L-alanyl-tRNA(Ala) + AMP + diphosphate</text>
        <dbReference type="Rhea" id="RHEA:12540"/>
        <dbReference type="Rhea" id="RHEA-COMP:9657"/>
        <dbReference type="Rhea" id="RHEA-COMP:9923"/>
        <dbReference type="ChEBI" id="CHEBI:30616"/>
        <dbReference type="ChEBI" id="CHEBI:33019"/>
        <dbReference type="ChEBI" id="CHEBI:57972"/>
        <dbReference type="ChEBI" id="CHEBI:78442"/>
        <dbReference type="ChEBI" id="CHEBI:78497"/>
        <dbReference type="ChEBI" id="CHEBI:456215"/>
        <dbReference type="EC" id="6.1.1.7"/>
    </reaction>
</comment>
<comment type="cofactor">
    <cofactor evidence="1">
        <name>Zn(2+)</name>
        <dbReference type="ChEBI" id="CHEBI:29105"/>
    </cofactor>
    <text evidence="1">Binds 1 zinc ion per subunit.</text>
</comment>
<comment type="subcellular location">
    <subcellularLocation>
        <location evidence="1">Cytoplasm</location>
    </subcellularLocation>
</comment>
<comment type="domain">
    <text evidence="1">Consists of three domains; the N-terminal catalytic domain, the editing domain and the C-terminal C-Ala domain. The editing domain removes incorrectly charged amino acids, while the C-Ala domain, along with tRNA(Ala), serves as a bridge to cooperatively bring together the editing and aminoacylation centers thus stimulating deacylation of misacylated tRNAs.</text>
</comment>
<comment type="similarity">
    <text evidence="1">Belongs to the class-II aminoacyl-tRNA synthetase family.</text>
</comment>
<protein>
    <recommendedName>
        <fullName evidence="1">Alanine--tRNA ligase</fullName>
        <ecNumber evidence="1">6.1.1.7</ecNumber>
    </recommendedName>
    <alternativeName>
        <fullName evidence="1">Alanyl-tRNA synthetase</fullName>
        <shortName evidence="1">AlaRS</shortName>
    </alternativeName>
</protein>
<organism>
    <name type="scientific">Dechloromonas aromatica (strain RCB)</name>
    <dbReference type="NCBI Taxonomy" id="159087"/>
    <lineage>
        <taxon>Bacteria</taxon>
        <taxon>Pseudomonadati</taxon>
        <taxon>Pseudomonadota</taxon>
        <taxon>Betaproteobacteria</taxon>
        <taxon>Rhodocyclales</taxon>
        <taxon>Azonexaceae</taxon>
        <taxon>Dechloromonas</taxon>
    </lineage>
</organism>
<evidence type="ECO:0000255" key="1">
    <source>
        <dbReference type="HAMAP-Rule" id="MF_00036"/>
    </source>
</evidence>